<accession>B0K775</accession>
<sequence length="201" mass="22382">MQSVSIEAIKRDTGKNAARRLKNQGYIPAILYGKGMAESIPLAVEYNKLQRLLQKHGRNVLLNVIVDGSTHNAVIKEIQEDTLKGKIIHVDFQRVSMYEEIEATVPLKFEGTGLIESRGGIVQHQLWELTVESLPDKIPQEIVVDLSNLEIGDTLFVKDIQVPEGVKVVDDPDEIVVSVLAPRESEEEAEEEATETAKESE</sequence>
<evidence type="ECO:0000255" key="1">
    <source>
        <dbReference type="HAMAP-Rule" id="MF_01334"/>
    </source>
</evidence>
<evidence type="ECO:0000256" key="2">
    <source>
        <dbReference type="SAM" id="MobiDB-lite"/>
    </source>
</evidence>
<evidence type="ECO:0000305" key="3"/>
<feature type="chain" id="PRO_1000142556" description="Large ribosomal subunit protein bL25">
    <location>
        <begin position="1"/>
        <end position="201"/>
    </location>
</feature>
<feature type="region of interest" description="Disordered" evidence="2">
    <location>
        <begin position="181"/>
        <end position="201"/>
    </location>
</feature>
<feature type="compositionally biased region" description="Acidic residues" evidence="2">
    <location>
        <begin position="185"/>
        <end position="194"/>
    </location>
</feature>
<name>RL25_THEP3</name>
<dbReference type="EMBL" id="CP000924">
    <property type="protein sequence ID" value="ABY94222.1"/>
    <property type="molecule type" value="Genomic_DNA"/>
</dbReference>
<dbReference type="RefSeq" id="WP_003866585.1">
    <property type="nucleotide sequence ID" value="NC_010321.1"/>
</dbReference>
<dbReference type="SMR" id="B0K775"/>
<dbReference type="STRING" id="340099.Teth39_0558"/>
<dbReference type="KEGG" id="tpd:Teth39_0558"/>
<dbReference type="eggNOG" id="COG1825">
    <property type="taxonomic scope" value="Bacteria"/>
</dbReference>
<dbReference type="HOGENOM" id="CLU_075939_2_1_9"/>
<dbReference type="Proteomes" id="UP000002156">
    <property type="component" value="Chromosome"/>
</dbReference>
<dbReference type="GO" id="GO:0022625">
    <property type="term" value="C:cytosolic large ribosomal subunit"/>
    <property type="evidence" value="ECO:0007669"/>
    <property type="project" value="TreeGrafter"/>
</dbReference>
<dbReference type="GO" id="GO:0008097">
    <property type="term" value="F:5S rRNA binding"/>
    <property type="evidence" value="ECO:0007669"/>
    <property type="project" value="InterPro"/>
</dbReference>
<dbReference type="GO" id="GO:0003735">
    <property type="term" value="F:structural constituent of ribosome"/>
    <property type="evidence" value="ECO:0007669"/>
    <property type="project" value="InterPro"/>
</dbReference>
<dbReference type="GO" id="GO:0006412">
    <property type="term" value="P:translation"/>
    <property type="evidence" value="ECO:0007669"/>
    <property type="project" value="UniProtKB-UniRule"/>
</dbReference>
<dbReference type="CDD" id="cd00495">
    <property type="entry name" value="Ribosomal_L25_TL5_CTC"/>
    <property type="match status" value="1"/>
</dbReference>
<dbReference type="Gene3D" id="2.170.120.20">
    <property type="entry name" value="Ribosomal protein L25, beta domain"/>
    <property type="match status" value="1"/>
</dbReference>
<dbReference type="Gene3D" id="2.40.240.10">
    <property type="entry name" value="Ribosomal Protein L25, Chain P"/>
    <property type="match status" value="1"/>
</dbReference>
<dbReference type="HAMAP" id="MF_01334">
    <property type="entry name" value="Ribosomal_bL25_CTC"/>
    <property type="match status" value="1"/>
</dbReference>
<dbReference type="InterPro" id="IPR020056">
    <property type="entry name" value="Rbsml_bL25/Gln-tRNA_synth_N"/>
</dbReference>
<dbReference type="InterPro" id="IPR011035">
    <property type="entry name" value="Ribosomal_bL25/Gln-tRNA_synth"/>
</dbReference>
<dbReference type="InterPro" id="IPR020057">
    <property type="entry name" value="Ribosomal_bL25_b-dom"/>
</dbReference>
<dbReference type="InterPro" id="IPR037121">
    <property type="entry name" value="Ribosomal_bL25_C"/>
</dbReference>
<dbReference type="InterPro" id="IPR001021">
    <property type="entry name" value="Ribosomal_bL25_long"/>
</dbReference>
<dbReference type="InterPro" id="IPR029751">
    <property type="entry name" value="Ribosomal_L25_dom"/>
</dbReference>
<dbReference type="InterPro" id="IPR020930">
    <property type="entry name" value="Ribosomal_uL5_bac-type"/>
</dbReference>
<dbReference type="NCBIfam" id="TIGR00731">
    <property type="entry name" value="bL25_bact_ctc"/>
    <property type="match status" value="1"/>
</dbReference>
<dbReference type="NCBIfam" id="NF004141">
    <property type="entry name" value="PRK05618.4-4"/>
    <property type="match status" value="1"/>
</dbReference>
<dbReference type="PANTHER" id="PTHR33284">
    <property type="entry name" value="RIBOSOMAL PROTEIN L25/GLN-TRNA SYNTHETASE, ANTI-CODON-BINDING DOMAIN-CONTAINING PROTEIN"/>
    <property type="match status" value="1"/>
</dbReference>
<dbReference type="PANTHER" id="PTHR33284:SF1">
    <property type="entry name" value="RIBOSOMAL PROTEIN L25_GLN-TRNA SYNTHETASE, ANTI-CODON-BINDING DOMAIN-CONTAINING PROTEIN"/>
    <property type="match status" value="1"/>
</dbReference>
<dbReference type="Pfam" id="PF01386">
    <property type="entry name" value="Ribosomal_L25p"/>
    <property type="match status" value="1"/>
</dbReference>
<dbReference type="Pfam" id="PF14693">
    <property type="entry name" value="Ribosomal_TL5_C"/>
    <property type="match status" value="1"/>
</dbReference>
<dbReference type="SUPFAM" id="SSF50715">
    <property type="entry name" value="Ribosomal protein L25-like"/>
    <property type="match status" value="1"/>
</dbReference>
<protein>
    <recommendedName>
        <fullName evidence="1">Large ribosomal subunit protein bL25</fullName>
    </recommendedName>
    <alternativeName>
        <fullName evidence="3">50S ribosomal protein L25</fullName>
    </alternativeName>
    <alternativeName>
        <fullName evidence="1">General stress protein CTC</fullName>
    </alternativeName>
</protein>
<organism>
    <name type="scientific">Thermoanaerobacter pseudethanolicus (strain ATCC 33223 / 39E)</name>
    <name type="common">Clostridium thermohydrosulfuricum</name>
    <dbReference type="NCBI Taxonomy" id="340099"/>
    <lineage>
        <taxon>Bacteria</taxon>
        <taxon>Bacillati</taxon>
        <taxon>Bacillota</taxon>
        <taxon>Clostridia</taxon>
        <taxon>Thermoanaerobacterales</taxon>
        <taxon>Thermoanaerobacteraceae</taxon>
        <taxon>Thermoanaerobacter</taxon>
    </lineage>
</organism>
<gene>
    <name evidence="1" type="primary">rplY</name>
    <name evidence="1" type="synonym">ctc</name>
    <name type="ordered locus">Teth39_0558</name>
</gene>
<comment type="function">
    <text evidence="1">This is one of the proteins that binds to the 5S RNA in the ribosome where it forms part of the central protuberance.</text>
</comment>
<comment type="subunit">
    <text evidence="1">Part of the 50S ribosomal subunit; part of the 5S rRNA/L5/L18/L25 subcomplex. Contacts the 5S rRNA. Binds to the 5S rRNA independently of L5 and L18.</text>
</comment>
<comment type="similarity">
    <text evidence="1">Belongs to the bacterial ribosomal protein bL25 family. CTC subfamily.</text>
</comment>
<keyword id="KW-1185">Reference proteome</keyword>
<keyword id="KW-0687">Ribonucleoprotein</keyword>
<keyword id="KW-0689">Ribosomal protein</keyword>
<keyword id="KW-0694">RNA-binding</keyword>
<keyword id="KW-0699">rRNA-binding</keyword>
<reference key="1">
    <citation type="submission" date="2008-01" db="EMBL/GenBank/DDBJ databases">
        <title>Complete sequence of Thermoanaerobacter pseudethanolicus 39E.</title>
        <authorList>
            <person name="Copeland A."/>
            <person name="Lucas S."/>
            <person name="Lapidus A."/>
            <person name="Barry K."/>
            <person name="Glavina del Rio T."/>
            <person name="Dalin E."/>
            <person name="Tice H."/>
            <person name="Pitluck S."/>
            <person name="Bruce D."/>
            <person name="Goodwin L."/>
            <person name="Saunders E."/>
            <person name="Brettin T."/>
            <person name="Detter J.C."/>
            <person name="Han C."/>
            <person name="Schmutz J."/>
            <person name="Larimer F."/>
            <person name="Land M."/>
            <person name="Hauser L."/>
            <person name="Kyrpides N."/>
            <person name="Lykidis A."/>
            <person name="Hemme C."/>
            <person name="Fields M.W."/>
            <person name="He Z."/>
            <person name="Zhou J."/>
            <person name="Richardson P."/>
        </authorList>
    </citation>
    <scope>NUCLEOTIDE SEQUENCE [LARGE SCALE GENOMIC DNA]</scope>
    <source>
        <strain>ATCC 33223 / DSM 2355 / 39E</strain>
    </source>
</reference>
<proteinExistence type="inferred from homology"/>